<reference key="1">
    <citation type="journal article" date="2006" name="J. Bacteriol.">
        <title>Pathogenomic sequence analysis of Bacillus cereus and Bacillus thuringiensis isolates closely related to Bacillus anthracis.</title>
        <authorList>
            <person name="Han C.S."/>
            <person name="Xie G."/>
            <person name="Challacombe J.F."/>
            <person name="Altherr M.R."/>
            <person name="Bhotika S.S."/>
            <person name="Bruce D."/>
            <person name="Campbell C.S."/>
            <person name="Campbell M.L."/>
            <person name="Chen J."/>
            <person name="Chertkov O."/>
            <person name="Cleland C."/>
            <person name="Dimitrijevic M."/>
            <person name="Doggett N.A."/>
            <person name="Fawcett J.J."/>
            <person name="Glavina T."/>
            <person name="Goodwin L.A."/>
            <person name="Hill K.K."/>
            <person name="Hitchcock P."/>
            <person name="Jackson P.J."/>
            <person name="Keim P."/>
            <person name="Kewalramani A.R."/>
            <person name="Longmire J."/>
            <person name="Lucas S."/>
            <person name="Malfatti S."/>
            <person name="McMurry K."/>
            <person name="Meincke L.J."/>
            <person name="Misra M."/>
            <person name="Moseman B.L."/>
            <person name="Mundt M."/>
            <person name="Munk A.C."/>
            <person name="Okinaka R.T."/>
            <person name="Parson-Quintana B."/>
            <person name="Reilly L.P."/>
            <person name="Richardson P."/>
            <person name="Robinson D.L."/>
            <person name="Rubin E."/>
            <person name="Saunders E."/>
            <person name="Tapia R."/>
            <person name="Tesmer J.G."/>
            <person name="Thayer N."/>
            <person name="Thompson L.S."/>
            <person name="Tice H."/>
            <person name="Ticknor L.O."/>
            <person name="Wills P.L."/>
            <person name="Brettin T.S."/>
            <person name="Gilna P."/>
        </authorList>
    </citation>
    <scope>NUCLEOTIDE SEQUENCE [LARGE SCALE GENOMIC DNA]</scope>
    <source>
        <strain>97-27</strain>
    </source>
</reference>
<comment type="subcellular location">
    <subcellularLocation>
        <location evidence="2">Cell membrane</location>
        <topology evidence="2">Multi-pass membrane protein</topology>
    </subcellularLocation>
</comment>
<comment type="similarity">
    <text evidence="2">Belongs to the UPF0421 family.</text>
</comment>
<name>Y2513_BACHK</name>
<sequence>MNQVRKWNIIGGRVIKTGIAVFLTVLVCEFFNIPTIFAVITAIVTIEPTATDSIKKGLVRFPASTIGSAYAMTFTFFLGHQALSYALAAMFTIVTCQKLRLHAGTLVATLTAVAMIPITADHYFTAFLIRLATTSTGIIVSTVVNFFILPPHYVKTISGCTEELFVKTANVMEEWLTALMDGKVIKKETTYNLSKLTVLLHKAVQFVQYEQKDWKYHRHTKKEMRSFLLVQKQLHLLQQIIYHIDNLARAPIETCDWSQNEKEILRRTIHSIISILRNHCEKIDEEHFKLIDELDKQFWTNKNDLAHCKPNQYHHHFSSESIILFEVLSIHDMLEELKQIFEKYEGENQEKSILVDIK</sequence>
<organism>
    <name type="scientific">Bacillus thuringiensis subsp. konkukian (strain 97-27)</name>
    <dbReference type="NCBI Taxonomy" id="281309"/>
    <lineage>
        <taxon>Bacteria</taxon>
        <taxon>Bacillati</taxon>
        <taxon>Bacillota</taxon>
        <taxon>Bacilli</taxon>
        <taxon>Bacillales</taxon>
        <taxon>Bacillaceae</taxon>
        <taxon>Bacillus</taxon>
        <taxon>Bacillus cereus group</taxon>
    </lineage>
</organism>
<protein>
    <recommendedName>
        <fullName>UPF0421 protein BT9727_2513</fullName>
    </recommendedName>
</protein>
<gene>
    <name type="ordered locus">BT9727_2513</name>
</gene>
<keyword id="KW-1003">Cell membrane</keyword>
<keyword id="KW-0472">Membrane</keyword>
<keyword id="KW-0812">Transmembrane</keyword>
<keyword id="KW-1133">Transmembrane helix</keyword>
<proteinExistence type="inferred from homology"/>
<feature type="chain" id="PRO_0000283011" description="UPF0421 protein BT9727_2513">
    <location>
        <begin position="1"/>
        <end position="358"/>
    </location>
</feature>
<feature type="transmembrane region" description="Helical" evidence="1">
    <location>
        <begin position="19"/>
        <end position="39"/>
    </location>
</feature>
<feature type="transmembrane region" description="Helical" evidence="1">
    <location>
        <begin position="74"/>
        <end position="94"/>
    </location>
</feature>
<feature type="transmembrane region" description="Helical" evidence="1">
    <location>
        <begin position="109"/>
        <end position="129"/>
    </location>
</feature>
<feature type="transmembrane region" description="Helical" evidence="1">
    <location>
        <begin position="131"/>
        <end position="151"/>
    </location>
</feature>
<dbReference type="EMBL" id="AE017355">
    <property type="protein sequence ID" value="AAT61849.1"/>
    <property type="molecule type" value="Genomic_DNA"/>
</dbReference>
<dbReference type="RefSeq" id="WP_001077657.1">
    <property type="nucleotide sequence ID" value="NC_005957.1"/>
</dbReference>
<dbReference type="RefSeq" id="YP_036839.1">
    <property type="nucleotide sequence ID" value="NC_005957.1"/>
</dbReference>
<dbReference type="SMR" id="Q6HHY7"/>
<dbReference type="KEGG" id="btk:BT9727_2513"/>
<dbReference type="PATRIC" id="fig|281309.8.peg.2661"/>
<dbReference type="HOGENOM" id="CLU_067028_0_0_9"/>
<dbReference type="Proteomes" id="UP000001301">
    <property type="component" value="Chromosome"/>
</dbReference>
<dbReference type="GO" id="GO:0005886">
    <property type="term" value="C:plasma membrane"/>
    <property type="evidence" value="ECO:0007669"/>
    <property type="project" value="UniProtKB-SubCell"/>
</dbReference>
<dbReference type="InterPro" id="IPR010343">
    <property type="entry name" value="ArAE_1"/>
</dbReference>
<dbReference type="PANTHER" id="PTHR30509:SF9">
    <property type="entry name" value="MULTIDRUG RESISTANCE PROTEIN MDTO"/>
    <property type="match status" value="1"/>
</dbReference>
<dbReference type="PANTHER" id="PTHR30509">
    <property type="entry name" value="P-HYDROXYBENZOIC ACID EFFLUX PUMP SUBUNIT-RELATED"/>
    <property type="match status" value="1"/>
</dbReference>
<dbReference type="Pfam" id="PF06081">
    <property type="entry name" value="ArAE_1"/>
    <property type="match status" value="1"/>
</dbReference>
<evidence type="ECO:0000255" key="1"/>
<evidence type="ECO:0000305" key="2"/>
<accession>Q6HHY7</accession>